<evidence type="ECO:0000250" key="1">
    <source>
        <dbReference type="UniProtKB" id="P40087"/>
    </source>
</evidence>
<evidence type="ECO:0000250" key="2">
    <source>
        <dbReference type="UniProtKB" id="Q5TDH0"/>
    </source>
</evidence>
<evidence type="ECO:0000255" key="3">
    <source>
        <dbReference type="PROSITE-ProRule" id="PRU00212"/>
    </source>
</evidence>
<evidence type="ECO:0000256" key="4">
    <source>
        <dbReference type="SAM" id="MobiDB-lite"/>
    </source>
</evidence>
<evidence type="ECO:0000269" key="5">
    <source>
    </source>
</evidence>
<evidence type="ECO:0000269" key="6">
    <source>
    </source>
</evidence>
<evidence type="ECO:0000303" key="7">
    <source>
    </source>
</evidence>
<evidence type="ECO:0000303" key="8">
    <source>
    </source>
</evidence>
<evidence type="ECO:0000305" key="9"/>
<evidence type="ECO:0000312" key="10">
    <source>
        <dbReference type="PomBase" id="SPAC56F8.08"/>
    </source>
</evidence>
<evidence type="ECO:0007829" key="11">
    <source>
        <dbReference type="PDB" id="1Z96"/>
    </source>
</evidence>
<sequence>MNNLTPENIRQTILATPFLLNRIRTEFPQLAAVLNDPNAFATTWQSINASQLLQIPSSTYSMGMPSFSEDDLFDVEVQRRIEEQIRQNAVTENMQSAIENHPEVFGQVYMLFVNVEINGHKVKAFVDSGAQATILSADCAEKCGLTRLLDTRFQGVAKGVGMAKILGCVHSAPLKIGDLYLPCRFTVIEGRDVDMLLGLDMLRRYQACIDLENNVLRIHGKEIPFLGESEIPKLLANVEPSANAHGLGIEPASKASASSPNPQSGTRLGTKESVAPNNEGSSNPPSLVNPPTDPGLNSKIAQLVSMGFDPLEAAQALDAANGDLDVAASFLL</sequence>
<reference key="1">
    <citation type="journal article" date="2002" name="Nature">
        <title>The genome sequence of Schizosaccharomyces pombe.</title>
        <authorList>
            <person name="Wood V."/>
            <person name="Gwilliam R."/>
            <person name="Rajandream M.A."/>
            <person name="Lyne M.H."/>
            <person name="Lyne R."/>
            <person name="Stewart A."/>
            <person name="Sgouros J.G."/>
            <person name="Peat N."/>
            <person name="Hayles J."/>
            <person name="Baker S.G."/>
            <person name="Basham D."/>
            <person name="Bowman S."/>
            <person name="Brooks K."/>
            <person name="Brown D."/>
            <person name="Brown S."/>
            <person name="Chillingworth T."/>
            <person name="Churcher C.M."/>
            <person name="Collins M."/>
            <person name="Connor R."/>
            <person name="Cronin A."/>
            <person name="Davis P."/>
            <person name="Feltwell T."/>
            <person name="Fraser A."/>
            <person name="Gentles S."/>
            <person name="Goble A."/>
            <person name="Hamlin N."/>
            <person name="Harris D.E."/>
            <person name="Hidalgo J."/>
            <person name="Hodgson G."/>
            <person name="Holroyd S."/>
            <person name="Hornsby T."/>
            <person name="Howarth S."/>
            <person name="Huckle E.J."/>
            <person name="Hunt S."/>
            <person name="Jagels K."/>
            <person name="James K.D."/>
            <person name="Jones L."/>
            <person name="Jones M."/>
            <person name="Leather S."/>
            <person name="McDonald S."/>
            <person name="McLean J."/>
            <person name="Mooney P."/>
            <person name="Moule S."/>
            <person name="Mungall K.L."/>
            <person name="Murphy L.D."/>
            <person name="Niblett D."/>
            <person name="Odell C."/>
            <person name="Oliver K."/>
            <person name="O'Neil S."/>
            <person name="Pearson D."/>
            <person name="Quail M.A."/>
            <person name="Rabbinowitsch E."/>
            <person name="Rutherford K.M."/>
            <person name="Rutter S."/>
            <person name="Saunders D."/>
            <person name="Seeger K."/>
            <person name="Sharp S."/>
            <person name="Skelton J."/>
            <person name="Simmonds M.N."/>
            <person name="Squares R."/>
            <person name="Squares S."/>
            <person name="Stevens K."/>
            <person name="Taylor K."/>
            <person name="Taylor R.G."/>
            <person name="Tivey A."/>
            <person name="Walsh S.V."/>
            <person name="Warren T."/>
            <person name="Whitehead S."/>
            <person name="Woodward J.R."/>
            <person name="Volckaert G."/>
            <person name="Aert R."/>
            <person name="Robben J."/>
            <person name="Grymonprez B."/>
            <person name="Weltjens I."/>
            <person name="Vanstreels E."/>
            <person name="Rieger M."/>
            <person name="Schaefer M."/>
            <person name="Mueller-Auer S."/>
            <person name="Gabel C."/>
            <person name="Fuchs M."/>
            <person name="Duesterhoeft A."/>
            <person name="Fritzc C."/>
            <person name="Holzer E."/>
            <person name="Moestl D."/>
            <person name="Hilbert H."/>
            <person name="Borzym K."/>
            <person name="Langer I."/>
            <person name="Beck A."/>
            <person name="Lehrach H."/>
            <person name="Reinhardt R."/>
            <person name="Pohl T.M."/>
            <person name="Eger P."/>
            <person name="Zimmermann W."/>
            <person name="Wedler H."/>
            <person name="Wambutt R."/>
            <person name="Purnelle B."/>
            <person name="Goffeau A."/>
            <person name="Cadieu E."/>
            <person name="Dreano S."/>
            <person name="Gloux S."/>
            <person name="Lelaure V."/>
            <person name="Mottier S."/>
            <person name="Galibert F."/>
            <person name="Aves S.J."/>
            <person name="Xiang Z."/>
            <person name="Hunt C."/>
            <person name="Moore K."/>
            <person name="Hurst S.M."/>
            <person name="Lucas M."/>
            <person name="Rochet M."/>
            <person name="Gaillardin C."/>
            <person name="Tallada V.A."/>
            <person name="Garzon A."/>
            <person name="Thode G."/>
            <person name="Daga R.R."/>
            <person name="Cruzado L."/>
            <person name="Jimenez J."/>
            <person name="Sanchez M."/>
            <person name="del Rey F."/>
            <person name="Benito J."/>
            <person name="Dominguez A."/>
            <person name="Revuelta J.L."/>
            <person name="Moreno S."/>
            <person name="Armstrong J."/>
            <person name="Forsburg S.L."/>
            <person name="Cerutti L."/>
            <person name="Lowe T."/>
            <person name="McCombie W.R."/>
            <person name="Paulsen I."/>
            <person name="Potashkin J."/>
            <person name="Shpakovski G.V."/>
            <person name="Ussery D."/>
            <person name="Barrell B.G."/>
            <person name="Nurse P."/>
        </authorList>
    </citation>
    <scope>NUCLEOTIDE SEQUENCE [LARGE SCALE GENOMIC DNA]</scope>
    <source>
        <strain>972 / ATCC 24843</strain>
    </source>
</reference>
<reference key="2">
    <citation type="journal article" date="2001" name="Nat. Cell Biol.">
        <title>Proteins containing the UBA domain are able to bind to multi-ubiquitin chains.</title>
        <authorList>
            <person name="Wilkinson C.R.M."/>
            <person name="Seeger M."/>
            <person name="Hartmann-Petersen R."/>
            <person name="Stone M."/>
            <person name="Wallace M."/>
            <person name="Semple C."/>
            <person name="Gordon C."/>
        </authorList>
    </citation>
    <scope>FUNCTION</scope>
    <scope>SUBUNIT</scope>
</reference>
<reference key="3">
    <citation type="journal article" date="2005" name="EMBO J.">
        <title>Mechanism of Lys48-linked polyubiquitin chain recognition by the Mud1 UBA domain.</title>
        <authorList>
            <person name="Trempe J.F."/>
            <person name="Brown N.R."/>
            <person name="Lowe E.D."/>
            <person name="Gordon C."/>
            <person name="Campbell I.D."/>
            <person name="Noble M.E."/>
            <person name="Endicott J.A."/>
        </authorList>
    </citation>
    <scope>X-RAY CRYSTALLOGRAPHY (1.80 ANGSTROMS) OF 293-332</scope>
    <scope>FUNCTION</scope>
    <scope>SUBUNIT</scope>
    <scope>DOMAIN</scope>
    <scope>SITES</scope>
    <scope>MUTAGENESIS OF PHE-330</scope>
</reference>
<name>MUD1_SCHPO</name>
<organism>
    <name type="scientific">Schizosaccharomyces pombe (strain 972 / ATCC 24843)</name>
    <name type="common">Fission yeast</name>
    <dbReference type="NCBI Taxonomy" id="284812"/>
    <lineage>
        <taxon>Eukaryota</taxon>
        <taxon>Fungi</taxon>
        <taxon>Dikarya</taxon>
        <taxon>Ascomycota</taxon>
        <taxon>Taphrinomycotina</taxon>
        <taxon>Schizosaccharomycetes</taxon>
        <taxon>Schizosaccharomycetales</taxon>
        <taxon>Schizosaccharomycetaceae</taxon>
        <taxon>Schizosaccharomyces</taxon>
    </lineage>
</organism>
<comment type="function">
    <text evidence="1 5 6">Recognizes and binds polyubiquitin chains (PubMed:11584278, PubMed:16138082). Acts as a linker between the 19S proteasome and polyubiquitinated proteins via UBA domain interactions with ubiquitin for their subsequent degradation. Aspartic protease. Appears to act as negative regulator of constitutive exocytosis. May act at the level of secretory vesicle docking and fusion as a competitive inhibitor of SNARE assembly. Required for S-phase checkpoint control (By similarity).</text>
</comment>
<comment type="subunit">
    <text evidence="5 6">Homodimer (PubMed:16138082). Interacts (via UBA domain) with polyubiquitin (polyUb) chains (via Lys-48-linked polyUbs) (PubMed:11584278, PubMed:16138082). Has weak binding affinity for monoubiquitin (PubMed:16138082). According to another report, has no affinity for monoubiquitin (PubMed:11584278).</text>
</comment>
<comment type="subcellular location">
    <subcellularLocation>
        <location evidence="1">Cytoplasm</location>
    </subcellularLocation>
    <subcellularLocation>
        <location evidence="1">Cell membrane</location>
        <topology evidence="1">Peripheral membrane protein</topology>
        <orientation evidence="1">Cytoplasmic side</orientation>
    </subcellularLocation>
</comment>
<comment type="domain">
    <text evidence="6">The UBA domain specifically recognizes Lys-48-linked diubiquitin units (Ub2), which is mediated by the two binding sites within a single UBA domain.</text>
</comment>
<comment type="similarity">
    <text evidence="9">Belongs to the DDI1 family.</text>
</comment>
<protein>
    <recommendedName>
        <fullName evidence="7">UBA domain-containing protein Mud1</fullName>
        <ecNumber evidence="2">3.4.23.-</ecNumber>
    </recommendedName>
    <alternativeName>
        <fullName evidence="8">DNA-damage-inducible protein DDI1 homolog</fullName>
    </alternativeName>
    <alternativeName>
        <fullName evidence="7">UBA domain-containing protein 1</fullName>
    </alternativeName>
</protein>
<feature type="chain" id="PRO_0000096643" description="UBA domain-containing protein Mud1">
    <location>
        <begin position="1"/>
        <end position="332"/>
    </location>
</feature>
<feature type="domain" description="UBA" evidence="3">
    <location>
        <begin position="291"/>
        <end position="332"/>
    </location>
</feature>
<feature type="region of interest" description="Disordered" evidence="4">
    <location>
        <begin position="246"/>
        <end position="298"/>
    </location>
</feature>
<feature type="compositionally biased region" description="Low complexity" evidence="4">
    <location>
        <begin position="251"/>
        <end position="264"/>
    </location>
</feature>
<feature type="compositionally biased region" description="Polar residues" evidence="4">
    <location>
        <begin position="275"/>
        <end position="286"/>
    </location>
</feature>
<feature type="active site" evidence="2">
    <location>
        <position position="127"/>
    </location>
</feature>
<feature type="site" description="Involved in interaction with monoubiquitin" evidence="6">
    <location>
        <position position="303"/>
    </location>
</feature>
<feature type="site" description="Involved in interaction with monoubiquitin" evidence="6">
    <location>
        <position position="306"/>
    </location>
</feature>
<feature type="site" description="Involved in interaction with monoubiquitin" evidence="6">
    <location>
        <position position="307"/>
    </location>
</feature>
<feature type="site" description="Involved in interaction with monoubiquitin and Lys-48-linked diubiquitin (Ub2)" evidence="6">
    <location>
        <position position="308"/>
    </location>
</feature>
<feature type="site" description="Involved in interaction with monoubiquitin" evidence="6">
    <location>
        <position position="316"/>
    </location>
</feature>
<feature type="site" description="Involved in interaction with Lys-48-linked diubiquitin (Ub2)" evidence="6">
    <location>
        <position position="318"/>
    </location>
</feature>
<feature type="site" description="Involved in interaction with Lys-48-linked diubiquitin (Ub2)" evidence="6">
    <location>
        <position position="319"/>
    </location>
</feature>
<feature type="site" description="Involved in interaction with monoubiquitin and Lys-48-linked diubiquitin (Ub2)" evidence="6">
    <location>
        <position position="320"/>
    </location>
</feature>
<feature type="site" description="Involved in interaction with Lys-48-linked diubiquitin (Ub2)" evidence="6">
    <location>
        <position position="327"/>
    </location>
</feature>
<feature type="site" description="Involved in interaction with Lys-48-linked diubiquitin (Ub2)" evidence="6">
    <location>
        <position position="328"/>
    </location>
</feature>
<feature type="site" description="Involved in interaction with monoubiquitin" evidence="6">
    <location>
        <position position="330"/>
    </location>
</feature>
<feature type="site" description="Involved in interaction with monoubiquitin and Lys-48-linked diubiquitin (Ub2)" evidence="6">
    <location>
        <position position="331"/>
    </location>
</feature>
<feature type="site" description="Involved in interaction with monoubiquitin and Lys-48-linked diubiquitin (Ub2)" evidence="6">
    <location>
        <position position="332"/>
    </location>
</feature>
<feature type="mutagenesis site" description="20-fold reduction in binding affinity for Lys-48-linked diubiquitin (Ub2) compared to that of the wild-type. Significantly reduced binding affinity also for Lys-48-linked triubiquitin (Ub3) and tetraubiquitin (Ub4). Slightly reduced binding affinity for monoubiquitin. No effect on stability or structure of the UBA domain." evidence="6">
    <original>F</original>
    <variation>A</variation>
    <location>
        <position position="330"/>
    </location>
</feature>
<feature type="helix" evidence="11">
    <location>
        <begin position="296"/>
        <end position="305"/>
    </location>
</feature>
<feature type="helix" evidence="11">
    <location>
        <begin position="310"/>
        <end position="319"/>
    </location>
</feature>
<feature type="turn" evidence="11">
    <location>
        <begin position="320"/>
        <end position="322"/>
    </location>
</feature>
<feature type="helix" evidence="11">
    <location>
        <begin position="324"/>
        <end position="331"/>
    </location>
</feature>
<proteinExistence type="evidence at protein level"/>
<dbReference type="EC" id="3.4.23.-" evidence="2"/>
<dbReference type="EMBL" id="CU329670">
    <property type="protein sequence ID" value="CAA93579.1"/>
    <property type="molecule type" value="Genomic_DNA"/>
</dbReference>
<dbReference type="PIR" id="T38918">
    <property type="entry name" value="T38918"/>
</dbReference>
<dbReference type="RefSeq" id="NP_001018195.1">
    <property type="nucleotide sequence ID" value="NM_001018619.2"/>
</dbReference>
<dbReference type="PDB" id="1Z96">
    <property type="method" value="X-ray"/>
    <property type="resolution" value="1.80 A"/>
    <property type="chains" value="A/B=293-332"/>
</dbReference>
<dbReference type="PDBsum" id="1Z96"/>
<dbReference type="SMR" id="Q10256"/>
<dbReference type="BioGRID" id="280553">
    <property type="interactions" value="12"/>
</dbReference>
<dbReference type="FunCoup" id="Q10256">
    <property type="interactions" value="155"/>
</dbReference>
<dbReference type="MINT" id="Q10256"/>
<dbReference type="STRING" id="284812.Q10256"/>
<dbReference type="MEROPS" id="A28.A06"/>
<dbReference type="iPTMnet" id="Q10256"/>
<dbReference type="PaxDb" id="4896-SPAC56F8.08.1"/>
<dbReference type="EnsemblFungi" id="SPAC56F8.08.1">
    <property type="protein sequence ID" value="SPAC56F8.08.1:pep"/>
    <property type="gene ID" value="SPAC56F8.08"/>
</dbReference>
<dbReference type="GeneID" id="3361477"/>
<dbReference type="KEGG" id="spo:3361477"/>
<dbReference type="PomBase" id="SPAC56F8.08">
    <property type="gene designation" value="mud1"/>
</dbReference>
<dbReference type="VEuPathDB" id="FungiDB:SPAC56F8.08"/>
<dbReference type="eggNOG" id="KOG0012">
    <property type="taxonomic scope" value="Eukaryota"/>
</dbReference>
<dbReference type="HOGENOM" id="CLU_020435_2_0_1"/>
<dbReference type="InParanoid" id="Q10256"/>
<dbReference type="OMA" id="PCRFTVI"/>
<dbReference type="PhylomeDB" id="Q10256"/>
<dbReference type="EvolutionaryTrace" id="Q10256"/>
<dbReference type="PRO" id="PR:Q10256"/>
<dbReference type="Proteomes" id="UP000002485">
    <property type="component" value="Chromosome I"/>
</dbReference>
<dbReference type="GO" id="GO:0005737">
    <property type="term" value="C:cytoplasm"/>
    <property type="evidence" value="ECO:0007669"/>
    <property type="project" value="UniProtKB-SubCell"/>
</dbReference>
<dbReference type="GO" id="GO:0005886">
    <property type="term" value="C:plasma membrane"/>
    <property type="evidence" value="ECO:0000266"/>
    <property type="project" value="PomBase"/>
</dbReference>
<dbReference type="GO" id="GO:0004190">
    <property type="term" value="F:aspartic-type endopeptidase activity"/>
    <property type="evidence" value="ECO:0007669"/>
    <property type="project" value="UniProtKB-KW"/>
</dbReference>
<dbReference type="GO" id="GO:0036435">
    <property type="term" value="F:K48-linked polyubiquitin modification-dependent protein binding"/>
    <property type="evidence" value="ECO:0000314"/>
    <property type="project" value="PomBase"/>
</dbReference>
<dbReference type="GO" id="GO:0031593">
    <property type="term" value="F:polyubiquitin modification-dependent protein binding"/>
    <property type="evidence" value="ECO:0000314"/>
    <property type="project" value="PomBase"/>
</dbReference>
<dbReference type="GO" id="GO:0000149">
    <property type="term" value="F:SNARE binding"/>
    <property type="evidence" value="ECO:0000266"/>
    <property type="project" value="PomBase"/>
</dbReference>
<dbReference type="GO" id="GO:0043130">
    <property type="term" value="F:ubiquitin binding"/>
    <property type="evidence" value="ECO:0000314"/>
    <property type="project" value="PomBase"/>
</dbReference>
<dbReference type="GO" id="GO:0043161">
    <property type="term" value="P:proteasome-mediated ubiquitin-dependent protein catabolic process"/>
    <property type="evidence" value="ECO:0000304"/>
    <property type="project" value="PomBase"/>
</dbReference>
<dbReference type="GO" id="GO:0015031">
    <property type="term" value="P:protein transport"/>
    <property type="evidence" value="ECO:0007669"/>
    <property type="project" value="UniProtKB-KW"/>
</dbReference>
<dbReference type="GO" id="GO:0017157">
    <property type="term" value="P:regulation of exocytosis"/>
    <property type="evidence" value="ECO:0000266"/>
    <property type="project" value="PomBase"/>
</dbReference>
<dbReference type="CDD" id="cd05479">
    <property type="entry name" value="RP_DDI"/>
    <property type="match status" value="1"/>
</dbReference>
<dbReference type="CDD" id="cd14308">
    <property type="entry name" value="UBA_Mud1_like"/>
    <property type="match status" value="1"/>
</dbReference>
<dbReference type="Gene3D" id="2.40.70.10">
    <property type="entry name" value="Acid Proteases"/>
    <property type="match status" value="1"/>
</dbReference>
<dbReference type="Gene3D" id="1.10.8.10">
    <property type="entry name" value="DNA helicase RuvA subunit, C-terminal domain"/>
    <property type="match status" value="1"/>
</dbReference>
<dbReference type="InterPro" id="IPR019103">
    <property type="entry name" value="Peptidase_aspartic_DDI1-type"/>
</dbReference>
<dbReference type="InterPro" id="IPR021109">
    <property type="entry name" value="Peptidase_aspartic_dom_sf"/>
</dbReference>
<dbReference type="InterPro" id="IPR015940">
    <property type="entry name" value="UBA"/>
</dbReference>
<dbReference type="InterPro" id="IPR009060">
    <property type="entry name" value="UBA-like_sf"/>
</dbReference>
<dbReference type="PANTHER" id="PTHR12917">
    <property type="entry name" value="ASPARTYL PROTEASE DDI-RELATED"/>
    <property type="match status" value="1"/>
</dbReference>
<dbReference type="PANTHER" id="PTHR12917:SF1">
    <property type="entry name" value="AT13091P"/>
    <property type="match status" value="1"/>
</dbReference>
<dbReference type="Pfam" id="PF09668">
    <property type="entry name" value="Asp_protease"/>
    <property type="match status" value="1"/>
</dbReference>
<dbReference type="Pfam" id="PF00627">
    <property type="entry name" value="UBA"/>
    <property type="match status" value="1"/>
</dbReference>
<dbReference type="SMART" id="SM00165">
    <property type="entry name" value="UBA"/>
    <property type="match status" value="1"/>
</dbReference>
<dbReference type="SUPFAM" id="SSF50630">
    <property type="entry name" value="Acid proteases"/>
    <property type="match status" value="1"/>
</dbReference>
<dbReference type="SUPFAM" id="SSF46934">
    <property type="entry name" value="UBA-like"/>
    <property type="match status" value="1"/>
</dbReference>
<dbReference type="PROSITE" id="PS50030">
    <property type="entry name" value="UBA"/>
    <property type="match status" value="1"/>
</dbReference>
<gene>
    <name evidence="7" type="primary">mud1</name>
    <name evidence="8" type="synonym">ddi1</name>
    <name evidence="7" type="synonym">ucp1</name>
    <name evidence="10" type="ORF">SPAC56F8.08</name>
</gene>
<keyword id="KW-0002">3D-structure</keyword>
<keyword id="KW-0064">Aspartyl protease</keyword>
<keyword id="KW-1003">Cell membrane</keyword>
<keyword id="KW-0963">Cytoplasm</keyword>
<keyword id="KW-0378">Hydrolase</keyword>
<keyword id="KW-0472">Membrane</keyword>
<keyword id="KW-0645">Protease</keyword>
<keyword id="KW-0653">Protein transport</keyword>
<keyword id="KW-1185">Reference proteome</keyword>
<keyword id="KW-0813">Transport</keyword>
<accession>Q10256</accession>